<sequence>MVTHAMEEPKTFNIPTFVLDENCNFIPEVLSRANAKYIKDVLIQDSYNTVCLANSFIPMTIQTAEQIMVIITKFKFSRARDLFEKVLRLGVHINRFYAGKKQVKHMITMMKSLFDTEEAMRRLDRALMGLFVDARGSSYMPLIALSLHENGLPDSKFTKAVKLINTTLNSFHNRPDADIEQYAQKLRAYNYLYKIPHYTLKEAVDVYSENLKDLSIGVNKKPTLLFTSSDDGYLSHIFNDMLFLTSTWNMIYNCKVQIRRLTTWIKYEINSIVEDCVLVGFQLPDLKDTILDLAALTSNMNLVDPDKDLFSHYKLILEKLFEISIFATKANICILPTFIKSHLIEFEDVLKRSNDDEDLNYLLLKSNDSDDEYDEDKLPIQVDPGRVDNVLTDSNFFNVTADNAFSSIAIMPISYDKIIDVEENVIQVLEVEMQSLSAVVYGAVANKYGLSLPQVIKRLNQNEGRASSRASSSHSTSTIPYSPPQSGRSTPTSILRQRAPIRSNSRSSSVSFSQDDDNRSHYSDETNISDYSYPMADLDLEDEEPMEDHPHSPQSASSNNSMSRRSRALQNEQRRRTPTMAPPSPARGQNNARLRRRTRRSTETNDERL</sequence>
<feature type="chain" id="PRO_0000342570" description="Phosphoprotein 85">
    <location>
        <begin position="1"/>
        <end position="609"/>
    </location>
</feature>
<feature type="region of interest" description="Disordered" evidence="2">
    <location>
        <begin position="461"/>
        <end position="609"/>
    </location>
</feature>
<feature type="compositionally biased region" description="Low complexity" evidence="2">
    <location>
        <begin position="465"/>
        <end position="478"/>
    </location>
</feature>
<feature type="compositionally biased region" description="Polar residues" evidence="2">
    <location>
        <begin position="484"/>
        <end position="495"/>
    </location>
</feature>
<feature type="compositionally biased region" description="Low complexity" evidence="2">
    <location>
        <begin position="503"/>
        <end position="513"/>
    </location>
</feature>
<feature type="compositionally biased region" description="Low complexity" evidence="2">
    <location>
        <begin position="552"/>
        <end position="563"/>
    </location>
</feature>
<feature type="compositionally biased region" description="Basic and acidic residues" evidence="2">
    <location>
        <begin position="600"/>
        <end position="609"/>
    </location>
</feature>
<proteinExistence type="inferred from homology"/>
<reference key="1">
    <citation type="journal article" date="1994" name="J. Virol.">
        <title>Nucleotide sequence analysis of a 38.5-kilobase-pair region of the genome of human herpesvirus 6 encoding human cytomegalovirus immediate-early gene homologs and transactivating functions.</title>
        <authorList>
            <person name="Nicholas J."/>
            <person name="Martin M.E.D."/>
        </authorList>
    </citation>
    <scope>NUCLEOTIDE SEQUENCE [GENOMIC DNA]</scope>
</reference>
<reference key="2">
    <citation type="journal article" date="1995" name="Virology">
        <title>The DNA sequence of human herpesvirus-6: structure, coding content, and genome evolution.</title>
        <authorList>
            <person name="Gompels U.A."/>
            <person name="Nicholas J."/>
            <person name="Lawrence G.L."/>
            <person name="Jones M."/>
            <person name="Thomson B.J."/>
            <person name="Martin M.E.D."/>
            <person name="Efstathiou S."/>
            <person name="Craxton M.A."/>
            <person name="Macaulay H.A."/>
        </authorList>
    </citation>
    <scope>NUCLEOTIDE SEQUENCE [LARGE SCALE GENOMIC DNA]</scope>
</reference>
<name>PP85_HHV6U</name>
<evidence type="ECO:0000250" key="1"/>
<evidence type="ECO:0000256" key="2">
    <source>
        <dbReference type="SAM" id="MobiDB-lite"/>
    </source>
</evidence>
<evidence type="ECO:0000305" key="3"/>
<dbReference type="EMBL" id="L25528">
    <property type="protein sequence ID" value="AAA16719.1"/>
    <property type="status" value="ALT_INIT"/>
    <property type="molecule type" value="Genomic_DNA"/>
</dbReference>
<dbReference type="EMBL" id="X83413">
    <property type="protein sequence ID" value="CAA58393.1"/>
    <property type="molecule type" value="Genomic_DNA"/>
</dbReference>
<dbReference type="PIR" id="T09306">
    <property type="entry name" value="T09306"/>
</dbReference>
<dbReference type="RefSeq" id="NP_042906.1">
    <property type="nucleotide sequence ID" value="NC_001664.2"/>
</dbReference>
<dbReference type="SMR" id="Q69549"/>
<dbReference type="DNASU" id="1487898"/>
<dbReference type="GeneID" id="1487898"/>
<dbReference type="KEGG" id="vg:1487898"/>
<dbReference type="Proteomes" id="UP000009295">
    <property type="component" value="Segment"/>
</dbReference>
<dbReference type="GO" id="GO:0030430">
    <property type="term" value="C:host cell cytoplasm"/>
    <property type="evidence" value="ECO:0007669"/>
    <property type="project" value="UniProtKB-SubCell"/>
</dbReference>
<dbReference type="GO" id="GO:0019033">
    <property type="term" value="C:viral tegument"/>
    <property type="evidence" value="ECO:0007669"/>
    <property type="project" value="UniProtKB-SubCell"/>
</dbReference>
<dbReference type="InterPro" id="IPR006731">
    <property type="entry name" value="Herpes_pp85"/>
</dbReference>
<dbReference type="Pfam" id="PF04637">
    <property type="entry name" value="Herpes_pp85"/>
    <property type="match status" value="1"/>
</dbReference>
<accession>Q69549</accession>
<accession>Q69037</accession>
<organismHost>
    <name type="scientific">Homo sapiens</name>
    <name type="common">Human</name>
    <dbReference type="NCBI Taxonomy" id="9606"/>
</organismHost>
<keyword id="KW-1035">Host cytoplasm</keyword>
<keyword id="KW-0597">Phosphoprotein</keyword>
<keyword id="KW-1185">Reference proteome</keyword>
<keyword id="KW-0946">Virion</keyword>
<keyword id="KW-0920">Virion tegument</keyword>
<protein>
    <recommendedName>
        <fullName>Phosphoprotein 85</fullName>
        <shortName>pp85</shortName>
    </recommendedName>
    <alternativeName>
        <fullName>Protein U14</fullName>
    </alternativeName>
</protein>
<organism>
    <name type="scientific">Human herpesvirus 6A (strain Uganda-1102)</name>
    <name type="common">HHV-6 variant A</name>
    <name type="synonym">Human B lymphotropic virus</name>
    <dbReference type="NCBI Taxonomy" id="10370"/>
    <lineage>
        <taxon>Viruses</taxon>
        <taxon>Duplodnaviria</taxon>
        <taxon>Heunggongvirae</taxon>
        <taxon>Peploviricota</taxon>
        <taxon>Herviviricetes</taxon>
        <taxon>Herpesvirales</taxon>
        <taxon>Orthoherpesviridae</taxon>
        <taxon>Betaherpesvirinae</taxon>
        <taxon>Roseolovirus</taxon>
        <taxon>Roseolovirus humanbeta6a</taxon>
        <taxon>Human betaherpesvirus 6A</taxon>
    </lineage>
</organism>
<comment type="subcellular location">
    <subcellularLocation>
        <location evidence="1">Virion tegument</location>
    </subcellularLocation>
    <subcellularLocation>
        <location>Host cytoplasm</location>
    </subcellularLocation>
    <text evidence="1">Expressed exclusively at the cytoplasmic level during the late phase of the virus replication cycle. Also found in dense bodies (By similarity).</text>
</comment>
<comment type="PTM">
    <text evidence="3">Phosphorylated.</text>
</comment>
<comment type="similarity">
    <text evidence="3">Belongs to the herpesviridae pp85 family.</text>
</comment>
<comment type="sequence caution" evidence="3">
    <conflict type="erroneous initiation">
        <sequence resource="EMBL-CDS" id="AAA16719"/>
    </conflict>
    <text>Extended N-terminus.</text>
</comment>
<gene>
    <name type="primary">U14</name>
    <name type="synonym">EFRF2</name>
</gene>